<protein>
    <recommendedName>
        <fullName evidence="1">Ribosomal protein uS12 methylthiotransferase RimO</fullName>
        <shortName evidence="1">uS12 MTTase</shortName>
        <shortName evidence="1">uS12 methylthiotransferase</shortName>
        <ecNumber evidence="1">2.8.4.4</ecNumber>
    </recommendedName>
    <alternativeName>
        <fullName evidence="1">Ribosomal protein uS12 (aspartate-C(3))-methylthiotransferase</fullName>
    </alternativeName>
    <alternativeName>
        <fullName evidence="1">Ribosome maturation factor RimO</fullName>
    </alternativeName>
</protein>
<dbReference type="EC" id="2.8.4.4" evidence="1"/>
<dbReference type="EMBL" id="AM942759">
    <property type="protein sequence ID" value="CAR46244.1"/>
    <property type="molecule type" value="Genomic_DNA"/>
</dbReference>
<dbReference type="RefSeq" id="WP_004246457.1">
    <property type="nucleotide sequence ID" value="NC_010554.1"/>
</dbReference>
<dbReference type="SMR" id="B4F137"/>
<dbReference type="EnsemblBacteria" id="CAR46244">
    <property type="protein sequence ID" value="CAR46244"/>
    <property type="gene ID" value="PMI3181"/>
</dbReference>
<dbReference type="GeneID" id="6801660"/>
<dbReference type="KEGG" id="pmr:PMI3181"/>
<dbReference type="eggNOG" id="COG0621">
    <property type="taxonomic scope" value="Bacteria"/>
</dbReference>
<dbReference type="HOGENOM" id="CLU_018697_0_0_6"/>
<dbReference type="Proteomes" id="UP000008319">
    <property type="component" value="Chromosome"/>
</dbReference>
<dbReference type="GO" id="GO:0005829">
    <property type="term" value="C:cytosol"/>
    <property type="evidence" value="ECO:0007669"/>
    <property type="project" value="TreeGrafter"/>
</dbReference>
<dbReference type="GO" id="GO:0051539">
    <property type="term" value="F:4 iron, 4 sulfur cluster binding"/>
    <property type="evidence" value="ECO:0007669"/>
    <property type="project" value="UniProtKB-UniRule"/>
</dbReference>
<dbReference type="GO" id="GO:0035599">
    <property type="term" value="F:aspartic acid methylthiotransferase activity"/>
    <property type="evidence" value="ECO:0007669"/>
    <property type="project" value="TreeGrafter"/>
</dbReference>
<dbReference type="GO" id="GO:0046872">
    <property type="term" value="F:metal ion binding"/>
    <property type="evidence" value="ECO:0007669"/>
    <property type="project" value="UniProtKB-KW"/>
</dbReference>
<dbReference type="GO" id="GO:0103039">
    <property type="term" value="F:protein methylthiotransferase activity"/>
    <property type="evidence" value="ECO:0007669"/>
    <property type="project" value="UniProtKB-EC"/>
</dbReference>
<dbReference type="GO" id="GO:0006400">
    <property type="term" value="P:tRNA modification"/>
    <property type="evidence" value="ECO:0007669"/>
    <property type="project" value="InterPro"/>
</dbReference>
<dbReference type="CDD" id="cd01335">
    <property type="entry name" value="Radical_SAM"/>
    <property type="match status" value="1"/>
</dbReference>
<dbReference type="FunFam" id="2.40.50.140:FF:000060">
    <property type="entry name" value="Ribosomal protein S12 methylthiotransferase RimO"/>
    <property type="match status" value="1"/>
</dbReference>
<dbReference type="FunFam" id="3.40.50.12160:FF:000002">
    <property type="entry name" value="Ribosomal protein S12 methylthiotransferase RimO"/>
    <property type="match status" value="1"/>
</dbReference>
<dbReference type="FunFam" id="3.80.30.20:FF:000001">
    <property type="entry name" value="tRNA-2-methylthio-N(6)-dimethylallyladenosine synthase 2"/>
    <property type="match status" value="1"/>
</dbReference>
<dbReference type="Gene3D" id="3.40.50.12160">
    <property type="entry name" value="Methylthiotransferase, N-terminal domain"/>
    <property type="match status" value="1"/>
</dbReference>
<dbReference type="Gene3D" id="2.40.50.140">
    <property type="entry name" value="Nucleic acid-binding proteins"/>
    <property type="match status" value="1"/>
</dbReference>
<dbReference type="Gene3D" id="3.80.30.20">
    <property type="entry name" value="tm_1862 like domain"/>
    <property type="match status" value="1"/>
</dbReference>
<dbReference type="HAMAP" id="MF_01865">
    <property type="entry name" value="MTTase_RimO"/>
    <property type="match status" value="1"/>
</dbReference>
<dbReference type="InterPro" id="IPR006638">
    <property type="entry name" value="Elp3/MiaA/NifB-like_rSAM"/>
</dbReference>
<dbReference type="InterPro" id="IPR005839">
    <property type="entry name" value="Methylthiotransferase"/>
</dbReference>
<dbReference type="InterPro" id="IPR020612">
    <property type="entry name" value="Methylthiotransferase_CS"/>
</dbReference>
<dbReference type="InterPro" id="IPR013848">
    <property type="entry name" value="Methylthiotransferase_N"/>
</dbReference>
<dbReference type="InterPro" id="IPR038135">
    <property type="entry name" value="Methylthiotransferase_N_sf"/>
</dbReference>
<dbReference type="InterPro" id="IPR012340">
    <property type="entry name" value="NA-bd_OB-fold"/>
</dbReference>
<dbReference type="InterPro" id="IPR005840">
    <property type="entry name" value="Ribosomal_uS12_MeSTrfase_RimO"/>
</dbReference>
<dbReference type="InterPro" id="IPR007197">
    <property type="entry name" value="rSAM"/>
</dbReference>
<dbReference type="InterPro" id="IPR023404">
    <property type="entry name" value="rSAM_horseshoe"/>
</dbReference>
<dbReference type="InterPro" id="IPR002792">
    <property type="entry name" value="TRAM_dom"/>
</dbReference>
<dbReference type="NCBIfam" id="TIGR01125">
    <property type="entry name" value="30S ribosomal protein S12 methylthiotransferase RimO"/>
    <property type="match status" value="1"/>
</dbReference>
<dbReference type="NCBIfam" id="TIGR00089">
    <property type="entry name" value="MiaB/RimO family radical SAM methylthiotransferase"/>
    <property type="match status" value="1"/>
</dbReference>
<dbReference type="PANTHER" id="PTHR43837">
    <property type="entry name" value="RIBOSOMAL PROTEIN S12 METHYLTHIOTRANSFERASE RIMO"/>
    <property type="match status" value="1"/>
</dbReference>
<dbReference type="PANTHER" id="PTHR43837:SF1">
    <property type="entry name" value="RIBOSOMAL PROTEIN US12 METHYLTHIOTRANSFERASE RIMO"/>
    <property type="match status" value="1"/>
</dbReference>
<dbReference type="Pfam" id="PF04055">
    <property type="entry name" value="Radical_SAM"/>
    <property type="match status" value="1"/>
</dbReference>
<dbReference type="Pfam" id="PF18693">
    <property type="entry name" value="TRAM_2"/>
    <property type="match status" value="1"/>
</dbReference>
<dbReference type="Pfam" id="PF00919">
    <property type="entry name" value="UPF0004"/>
    <property type="match status" value="1"/>
</dbReference>
<dbReference type="SFLD" id="SFLDG01082">
    <property type="entry name" value="B12-binding_domain_containing"/>
    <property type="match status" value="1"/>
</dbReference>
<dbReference type="SFLD" id="SFLDG01061">
    <property type="entry name" value="methylthiotransferase"/>
    <property type="match status" value="1"/>
</dbReference>
<dbReference type="SFLD" id="SFLDF00274">
    <property type="entry name" value="ribosomal_protein_S12_methylth"/>
    <property type="match status" value="1"/>
</dbReference>
<dbReference type="SMART" id="SM00729">
    <property type="entry name" value="Elp3"/>
    <property type="match status" value="1"/>
</dbReference>
<dbReference type="SUPFAM" id="SSF102114">
    <property type="entry name" value="Radical SAM enzymes"/>
    <property type="match status" value="1"/>
</dbReference>
<dbReference type="PROSITE" id="PS51449">
    <property type="entry name" value="MTTASE_N"/>
    <property type="match status" value="1"/>
</dbReference>
<dbReference type="PROSITE" id="PS01278">
    <property type="entry name" value="MTTASE_RADICAL"/>
    <property type="match status" value="1"/>
</dbReference>
<dbReference type="PROSITE" id="PS51918">
    <property type="entry name" value="RADICAL_SAM"/>
    <property type="match status" value="1"/>
</dbReference>
<dbReference type="PROSITE" id="PS50926">
    <property type="entry name" value="TRAM"/>
    <property type="match status" value="1"/>
</dbReference>
<organism>
    <name type="scientific">Proteus mirabilis (strain HI4320)</name>
    <dbReference type="NCBI Taxonomy" id="529507"/>
    <lineage>
        <taxon>Bacteria</taxon>
        <taxon>Pseudomonadati</taxon>
        <taxon>Pseudomonadota</taxon>
        <taxon>Gammaproteobacteria</taxon>
        <taxon>Enterobacterales</taxon>
        <taxon>Morganellaceae</taxon>
        <taxon>Proteus</taxon>
    </lineage>
</organism>
<keyword id="KW-0004">4Fe-4S</keyword>
<keyword id="KW-0963">Cytoplasm</keyword>
<keyword id="KW-0408">Iron</keyword>
<keyword id="KW-0411">Iron-sulfur</keyword>
<keyword id="KW-0479">Metal-binding</keyword>
<keyword id="KW-1185">Reference proteome</keyword>
<keyword id="KW-0949">S-adenosyl-L-methionine</keyword>
<keyword id="KW-0808">Transferase</keyword>
<reference key="1">
    <citation type="journal article" date="2008" name="J. Bacteriol.">
        <title>Complete genome sequence of uropathogenic Proteus mirabilis, a master of both adherence and motility.</title>
        <authorList>
            <person name="Pearson M.M."/>
            <person name="Sebaihia M."/>
            <person name="Churcher C."/>
            <person name="Quail M.A."/>
            <person name="Seshasayee A.S."/>
            <person name="Luscombe N.M."/>
            <person name="Abdellah Z."/>
            <person name="Arrosmith C."/>
            <person name="Atkin B."/>
            <person name="Chillingworth T."/>
            <person name="Hauser H."/>
            <person name="Jagels K."/>
            <person name="Moule S."/>
            <person name="Mungall K."/>
            <person name="Norbertczak H."/>
            <person name="Rabbinowitsch E."/>
            <person name="Walker D."/>
            <person name="Whithead S."/>
            <person name="Thomson N.R."/>
            <person name="Rather P.N."/>
            <person name="Parkhill J."/>
            <person name="Mobley H.L.T."/>
        </authorList>
    </citation>
    <scope>NUCLEOTIDE SEQUENCE [LARGE SCALE GENOMIC DNA]</scope>
    <source>
        <strain>HI4320</strain>
    </source>
</reference>
<gene>
    <name evidence="1" type="primary">rimO</name>
    <name type="ordered locus">PMI3181</name>
</gene>
<sequence length="443" mass="49967">MSQTNQVPKIGFVSLGCPKNLVDSERILTELRTEGYQVVPTYDDADLVIVNTCGFIDSAVQESLEAIGEALDENGKVIVTGCLGAKENQIREVHPKVLEITGPHSYEQVLSHIHHYVPKPSHNPFTSLVPEQGVKLTPRHYAYLKISEGCNHRCTFCIIPSMRGDLDSRPIGEVLNEAKRLVNAGVKELLVISQDTSAYGVDTKHQTGFWDGMPVKTSMVSLCEQLAKLGIWVRLHYVYPYPHVDEVIPLMAEGKILPYLDIPLQHASPKVLKLMKRPGSVERTLERVKRWREICPELTLRSTFIVGFPGETEEDFQMLLDFLTEARLDRVGCFKYSPVEGAKANELPDQVPEEVKEERYHRFMQLQQQISTERLQEKIGKVLPVIIDEVDEEGAIGRSMADAPEIDGAVYLNEQFDVEPGQIVRVLIEHADEYDLWGTIVEQ</sequence>
<proteinExistence type="inferred from homology"/>
<feature type="chain" id="PRO_0000374938" description="Ribosomal protein uS12 methylthiotransferase RimO">
    <location>
        <begin position="1"/>
        <end position="443"/>
    </location>
</feature>
<feature type="domain" description="MTTase N-terminal" evidence="1">
    <location>
        <begin position="8"/>
        <end position="118"/>
    </location>
</feature>
<feature type="domain" description="Radical SAM core" evidence="2">
    <location>
        <begin position="136"/>
        <end position="373"/>
    </location>
</feature>
<feature type="domain" description="TRAM" evidence="1">
    <location>
        <begin position="376"/>
        <end position="442"/>
    </location>
</feature>
<feature type="binding site" evidence="1">
    <location>
        <position position="17"/>
    </location>
    <ligand>
        <name>[4Fe-4S] cluster</name>
        <dbReference type="ChEBI" id="CHEBI:49883"/>
        <label>1</label>
    </ligand>
</feature>
<feature type="binding site" evidence="1">
    <location>
        <position position="53"/>
    </location>
    <ligand>
        <name>[4Fe-4S] cluster</name>
        <dbReference type="ChEBI" id="CHEBI:49883"/>
        <label>1</label>
    </ligand>
</feature>
<feature type="binding site" evidence="1">
    <location>
        <position position="82"/>
    </location>
    <ligand>
        <name>[4Fe-4S] cluster</name>
        <dbReference type="ChEBI" id="CHEBI:49883"/>
        <label>1</label>
    </ligand>
</feature>
<feature type="binding site" evidence="1">
    <location>
        <position position="150"/>
    </location>
    <ligand>
        <name>[4Fe-4S] cluster</name>
        <dbReference type="ChEBI" id="CHEBI:49883"/>
        <label>2</label>
        <note>4Fe-4S-S-AdoMet</note>
    </ligand>
</feature>
<feature type="binding site" evidence="1">
    <location>
        <position position="154"/>
    </location>
    <ligand>
        <name>[4Fe-4S] cluster</name>
        <dbReference type="ChEBI" id="CHEBI:49883"/>
        <label>2</label>
        <note>4Fe-4S-S-AdoMet</note>
    </ligand>
</feature>
<feature type="binding site" evidence="1">
    <location>
        <position position="157"/>
    </location>
    <ligand>
        <name>[4Fe-4S] cluster</name>
        <dbReference type="ChEBI" id="CHEBI:49883"/>
        <label>2</label>
        <note>4Fe-4S-S-AdoMet</note>
    </ligand>
</feature>
<comment type="function">
    <text evidence="1">Catalyzes the methylthiolation of an aspartic acid residue of ribosomal protein uS12.</text>
</comment>
<comment type="catalytic activity">
    <reaction evidence="1">
        <text>L-aspartate(89)-[ribosomal protein uS12]-hydrogen + (sulfur carrier)-SH + AH2 + 2 S-adenosyl-L-methionine = 3-methylsulfanyl-L-aspartate(89)-[ribosomal protein uS12]-hydrogen + (sulfur carrier)-H + 5'-deoxyadenosine + L-methionine + A + S-adenosyl-L-homocysteine + 2 H(+)</text>
        <dbReference type="Rhea" id="RHEA:37087"/>
        <dbReference type="Rhea" id="RHEA-COMP:10460"/>
        <dbReference type="Rhea" id="RHEA-COMP:10461"/>
        <dbReference type="Rhea" id="RHEA-COMP:14737"/>
        <dbReference type="Rhea" id="RHEA-COMP:14739"/>
        <dbReference type="ChEBI" id="CHEBI:13193"/>
        <dbReference type="ChEBI" id="CHEBI:15378"/>
        <dbReference type="ChEBI" id="CHEBI:17319"/>
        <dbReference type="ChEBI" id="CHEBI:17499"/>
        <dbReference type="ChEBI" id="CHEBI:29917"/>
        <dbReference type="ChEBI" id="CHEBI:29961"/>
        <dbReference type="ChEBI" id="CHEBI:57844"/>
        <dbReference type="ChEBI" id="CHEBI:57856"/>
        <dbReference type="ChEBI" id="CHEBI:59789"/>
        <dbReference type="ChEBI" id="CHEBI:64428"/>
        <dbReference type="ChEBI" id="CHEBI:73599"/>
        <dbReference type="EC" id="2.8.4.4"/>
    </reaction>
</comment>
<comment type="cofactor">
    <cofactor evidence="1">
        <name>[4Fe-4S] cluster</name>
        <dbReference type="ChEBI" id="CHEBI:49883"/>
    </cofactor>
    <text evidence="1">Binds 2 [4Fe-4S] clusters. One cluster is coordinated with 3 cysteines and an exchangeable S-adenosyl-L-methionine.</text>
</comment>
<comment type="subcellular location">
    <subcellularLocation>
        <location evidence="1">Cytoplasm</location>
    </subcellularLocation>
</comment>
<comment type="similarity">
    <text evidence="1">Belongs to the methylthiotransferase family. RimO subfamily.</text>
</comment>
<evidence type="ECO:0000255" key="1">
    <source>
        <dbReference type="HAMAP-Rule" id="MF_01865"/>
    </source>
</evidence>
<evidence type="ECO:0000255" key="2">
    <source>
        <dbReference type="PROSITE-ProRule" id="PRU01266"/>
    </source>
</evidence>
<name>RIMO_PROMH</name>
<accession>B4F137</accession>